<organism>
    <name type="scientific">Methanocella arvoryzae (strain DSM 22066 / NBRC 105507 / MRE50)</name>
    <dbReference type="NCBI Taxonomy" id="351160"/>
    <lineage>
        <taxon>Archaea</taxon>
        <taxon>Methanobacteriati</taxon>
        <taxon>Methanobacteriota</taxon>
        <taxon>Stenosarchaea group</taxon>
        <taxon>Methanomicrobia</taxon>
        <taxon>Methanocellales</taxon>
        <taxon>Methanocellaceae</taxon>
        <taxon>Methanocella</taxon>
    </lineage>
</organism>
<keyword id="KW-0963">Cytoplasm</keyword>
<keyword id="KW-0413">Isomerase</keyword>
<keyword id="KW-0627">Porphyrin biosynthesis</keyword>
<keyword id="KW-0663">Pyridoxal phosphate</keyword>
<keyword id="KW-1185">Reference proteome</keyword>
<sequence length="426" mass="46294">MKQDHSAQLYDEAKSLFPGGVSSPVRAIKPFPFFTKSASGSHITDVDGNEYIDCCLAYGPLILGHGHPAVKEAITKQLENGCLYGTPSEIEVKYGKLIQKYYPGMQKLRFVNTGTEATMGAIRAARGFTGRDKIVKIEGGFHGAHDAVLVKAGSGATTIGVPDSLGVPVDVVKNTLQVPYNDIHALEETLEAHKDEIACLIMEPVMGNMGPILPKDMYLRAVRNVTRDYDVLLIFDEVITGFRVSIFGAQGYYGVEPDLTTLGKIAGGGLPIGIFGGRKDIMETVAPQGGVYQAGTYNGNPLSLTAGMATVEVLEKESVHHKVNAKGKALWQSLTDIVRGLRMEGQVTPTGIASMFQLFFGPQPENYEQALKCDKLKFNEFWKHMLQNGVFFPPSQFETNFLSLAHSQADMEQIVTACKKSLAAVK</sequence>
<feature type="chain" id="PRO_1000060004" description="Glutamate-1-semialdehyde 2,1-aminomutase">
    <location>
        <begin position="1"/>
        <end position="426"/>
    </location>
</feature>
<feature type="modified residue" description="N6-(pyridoxal phosphate)lysine" evidence="1">
    <location>
        <position position="264"/>
    </location>
</feature>
<gene>
    <name evidence="1" type="primary">hemL</name>
    <name type="ordered locus">UNCMA_19330</name>
    <name type="ORF">RCIX913</name>
</gene>
<proteinExistence type="inferred from homology"/>
<protein>
    <recommendedName>
        <fullName evidence="1">Glutamate-1-semialdehyde 2,1-aminomutase</fullName>
        <shortName evidence="1">GSA</shortName>
        <ecNumber evidence="1">5.4.3.8</ecNumber>
    </recommendedName>
    <alternativeName>
        <fullName evidence="1">Glutamate-1-semialdehyde aminotransferase</fullName>
        <shortName evidence="1">GSA-AT</shortName>
    </alternativeName>
</protein>
<accession>Q0W5T3</accession>
<name>GSA_METAR</name>
<evidence type="ECO:0000255" key="1">
    <source>
        <dbReference type="HAMAP-Rule" id="MF_00375"/>
    </source>
</evidence>
<reference key="1">
    <citation type="journal article" date="2006" name="Science">
        <title>Genome of rice cluster I archaea -- the key methane producers in the rice rhizosphere.</title>
        <authorList>
            <person name="Erkel C."/>
            <person name="Kube M."/>
            <person name="Reinhardt R."/>
            <person name="Liesack W."/>
        </authorList>
    </citation>
    <scope>NUCLEOTIDE SEQUENCE [LARGE SCALE GENOMIC DNA]</scope>
    <source>
        <strain>DSM 22066 / NBRC 105507 / MRE50</strain>
    </source>
</reference>
<comment type="catalytic activity">
    <reaction evidence="1">
        <text>(S)-4-amino-5-oxopentanoate = 5-aminolevulinate</text>
        <dbReference type="Rhea" id="RHEA:14265"/>
        <dbReference type="ChEBI" id="CHEBI:57501"/>
        <dbReference type="ChEBI" id="CHEBI:356416"/>
        <dbReference type="EC" id="5.4.3.8"/>
    </reaction>
</comment>
<comment type="cofactor">
    <cofactor evidence="1">
        <name>pyridoxal 5'-phosphate</name>
        <dbReference type="ChEBI" id="CHEBI:597326"/>
    </cofactor>
</comment>
<comment type="pathway">
    <text evidence="1">Porphyrin-containing compound metabolism; protoporphyrin-IX biosynthesis; 5-aminolevulinate from L-glutamyl-tRNA(Glu): step 2/2.</text>
</comment>
<comment type="subcellular location">
    <subcellularLocation>
        <location evidence="1">Cytoplasm</location>
    </subcellularLocation>
</comment>
<comment type="similarity">
    <text evidence="1">Belongs to the class-III pyridoxal-phosphate-dependent aminotransferase family. HemL subfamily.</text>
</comment>
<dbReference type="EC" id="5.4.3.8" evidence="1"/>
<dbReference type="EMBL" id="AM114193">
    <property type="protein sequence ID" value="CAJ36260.1"/>
    <property type="molecule type" value="Genomic_DNA"/>
</dbReference>
<dbReference type="RefSeq" id="WP_012036258.1">
    <property type="nucleotide sequence ID" value="NC_009464.1"/>
</dbReference>
<dbReference type="SMR" id="Q0W5T3"/>
<dbReference type="STRING" id="351160.RCIX913"/>
<dbReference type="GeneID" id="5145813"/>
<dbReference type="KEGG" id="rci:RCIX913"/>
<dbReference type="PATRIC" id="fig|351160.9.peg.1981"/>
<dbReference type="eggNOG" id="arCOG00918">
    <property type="taxonomic scope" value="Archaea"/>
</dbReference>
<dbReference type="OrthoDB" id="6524at2157"/>
<dbReference type="UniPathway" id="UPA00251">
    <property type="reaction ID" value="UER00317"/>
</dbReference>
<dbReference type="Proteomes" id="UP000000663">
    <property type="component" value="Chromosome"/>
</dbReference>
<dbReference type="GO" id="GO:0005737">
    <property type="term" value="C:cytoplasm"/>
    <property type="evidence" value="ECO:0007669"/>
    <property type="project" value="UniProtKB-SubCell"/>
</dbReference>
<dbReference type="GO" id="GO:0042286">
    <property type="term" value="F:glutamate-1-semialdehyde 2,1-aminomutase activity"/>
    <property type="evidence" value="ECO:0007669"/>
    <property type="project" value="UniProtKB-UniRule"/>
</dbReference>
<dbReference type="GO" id="GO:0030170">
    <property type="term" value="F:pyridoxal phosphate binding"/>
    <property type="evidence" value="ECO:0007669"/>
    <property type="project" value="InterPro"/>
</dbReference>
<dbReference type="GO" id="GO:0008483">
    <property type="term" value="F:transaminase activity"/>
    <property type="evidence" value="ECO:0007669"/>
    <property type="project" value="InterPro"/>
</dbReference>
<dbReference type="GO" id="GO:0006782">
    <property type="term" value="P:protoporphyrinogen IX biosynthetic process"/>
    <property type="evidence" value="ECO:0007669"/>
    <property type="project" value="UniProtKB-UniRule"/>
</dbReference>
<dbReference type="CDD" id="cd00610">
    <property type="entry name" value="OAT_like"/>
    <property type="match status" value="1"/>
</dbReference>
<dbReference type="FunFam" id="3.40.640.10:FF:000021">
    <property type="entry name" value="Glutamate-1-semialdehyde 2,1-aminomutase"/>
    <property type="match status" value="1"/>
</dbReference>
<dbReference type="Gene3D" id="3.90.1150.10">
    <property type="entry name" value="Aspartate Aminotransferase, domain 1"/>
    <property type="match status" value="1"/>
</dbReference>
<dbReference type="Gene3D" id="3.40.640.10">
    <property type="entry name" value="Type I PLP-dependent aspartate aminotransferase-like (Major domain)"/>
    <property type="match status" value="1"/>
</dbReference>
<dbReference type="HAMAP" id="MF_00375">
    <property type="entry name" value="HemL_aminotrans_3"/>
    <property type="match status" value="1"/>
</dbReference>
<dbReference type="InterPro" id="IPR004639">
    <property type="entry name" value="4pyrrol_synth_GluAld_NH2Trfase"/>
</dbReference>
<dbReference type="InterPro" id="IPR005814">
    <property type="entry name" value="Aminotrans_3"/>
</dbReference>
<dbReference type="InterPro" id="IPR049704">
    <property type="entry name" value="Aminotrans_3_PPA_site"/>
</dbReference>
<dbReference type="InterPro" id="IPR015424">
    <property type="entry name" value="PyrdxlP-dep_Trfase"/>
</dbReference>
<dbReference type="InterPro" id="IPR015421">
    <property type="entry name" value="PyrdxlP-dep_Trfase_major"/>
</dbReference>
<dbReference type="InterPro" id="IPR015422">
    <property type="entry name" value="PyrdxlP-dep_Trfase_small"/>
</dbReference>
<dbReference type="NCBIfam" id="TIGR00713">
    <property type="entry name" value="hemL"/>
    <property type="match status" value="1"/>
</dbReference>
<dbReference type="NCBIfam" id="NF000818">
    <property type="entry name" value="PRK00062.1"/>
    <property type="match status" value="1"/>
</dbReference>
<dbReference type="PANTHER" id="PTHR43713">
    <property type="entry name" value="GLUTAMATE-1-SEMIALDEHYDE 2,1-AMINOMUTASE"/>
    <property type="match status" value="1"/>
</dbReference>
<dbReference type="PANTHER" id="PTHR43713:SF3">
    <property type="entry name" value="GLUTAMATE-1-SEMIALDEHYDE 2,1-AMINOMUTASE 1, CHLOROPLASTIC-RELATED"/>
    <property type="match status" value="1"/>
</dbReference>
<dbReference type="Pfam" id="PF00202">
    <property type="entry name" value="Aminotran_3"/>
    <property type="match status" value="1"/>
</dbReference>
<dbReference type="SUPFAM" id="SSF53383">
    <property type="entry name" value="PLP-dependent transferases"/>
    <property type="match status" value="1"/>
</dbReference>
<dbReference type="PROSITE" id="PS00600">
    <property type="entry name" value="AA_TRANSFER_CLASS_3"/>
    <property type="match status" value="1"/>
</dbReference>